<keyword id="KW-0963">Cytoplasm</keyword>
<keyword id="KW-0489">Methyltransferase</keyword>
<keyword id="KW-0694">RNA-binding</keyword>
<keyword id="KW-0698">rRNA processing</keyword>
<keyword id="KW-0949">S-adenosyl-L-methionine</keyword>
<keyword id="KW-0808">Transferase</keyword>
<name>RLMKL_SALEP</name>
<sequence>MNSLFASTARGLEELLKTELEKLGAVGCQVVQGGVHFQGDTRLIYQSLMWSRLASRIILPMGECKVYSDLDLYLGVQAINWTEIFNPGATFAVHFSGLNDTIRNSQYGAMKVKDAIVDAFTRKNLPRPNVDRESPDLRINVWLNKETASIALDLSGDGLHLRGYRDRTGLAPIKETLAAAIVMRSGWQPGTPLLDPMCGSGTLLIEAAMWATDRAPGLHRGHWGFSGWAQHDETIWQEVKAEAQTRARKGLAEYSSHFYGSDSDARVIERARSNARRAGIGELITFEVKDVAQLSNPLPKGPYGTVISNPPYGERLDSEPALIALHSLLGRTMKNQFGGWNLSLFSASPDLLGSLQLRADKQFKAKNGPLDCVQKNYHIAETTADSKPATVAEDYANRLRKNLKKLEKWARQEGIECYRLYDADLPEYNVAVDRYGDWAVIQEYAPPKTVDAQKARQRLFDIIAATLSVLGIPPNKLVLKTRERQKGKNQYQKMSEKGEFLEVSEYNARLWVNLTDYLDTGLFLDHRIARRMLGEMSKGKDFLNLFSYTGSASVHAGLGGARSTTTVDMSRTYLEWAERNLRLNGLSGRAHRLIQADCLGWLREANEQFDLIFIDPPTFSNSKRMEESFDVQRDHVALMKDLKRLLRKGGTIMFSNNKRGFRMDLEGLAELGLTAQEITQKTLSPDFARNRQIHNCWLIRAA</sequence>
<evidence type="ECO:0000255" key="1">
    <source>
        <dbReference type="HAMAP-Rule" id="MF_01858"/>
    </source>
</evidence>
<feature type="chain" id="PRO_0000366808" description="Ribosomal RNA large subunit methyltransferase K/L">
    <location>
        <begin position="1"/>
        <end position="702"/>
    </location>
</feature>
<feature type="domain" description="THUMP" evidence="1">
    <location>
        <begin position="43"/>
        <end position="154"/>
    </location>
</feature>
<proteinExistence type="inferred from homology"/>
<reference key="1">
    <citation type="journal article" date="2008" name="Genome Res.">
        <title>Comparative genome analysis of Salmonella enteritidis PT4 and Salmonella gallinarum 287/91 provides insights into evolutionary and host adaptation pathways.</title>
        <authorList>
            <person name="Thomson N.R."/>
            <person name="Clayton D.J."/>
            <person name="Windhorst D."/>
            <person name="Vernikos G."/>
            <person name="Davidson S."/>
            <person name="Churcher C."/>
            <person name="Quail M.A."/>
            <person name="Stevens M."/>
            <person name="Jones M.A."/>
            <person name="Watson M."/>
            <person name="Barron A."/>
            <person name="Layton A."/>
            <person name="Pickard D."/>
            <person name="Kingsley R.A."/>
            <person name="Bignell A."/>
            <person name="Clark L."/>
            <person name="Harris B."/>
            <person name="Ormond D."/>
            <person name="Abdellah Z."/>
            <person name="Brooks K."/>
            <person name="Cherevach I."/>
            <person name="Chillingworth T."/>
            <person name="Woodward J."/>
            <person name="Norberczak H."/>
            <person name="Lord A."/>
            <person name="Arrowsmith C."/>
            <person name="Jagels K."/>
            <person name="Moule S."/>
            <person name="Mungall K."/>
            <person name="Saunders M."/>
            <person name="Whitehead S."/>
            <person name="Chabalgoity J.A."/>
            <person name="Maskell D."/>
            <person name="Humphreys T."/>
            <person name="Roberts M."/>
            <person name="Barrow P.A."/>
            <person name="Dougan G."/>
            <person name="Parkhill J."/>
        </authorList>
    </citation>
    <scope>NUCLEOTIDE SEQUENCE [LARGE SCALE GENOMIC DNA]</scope>
    <source>
        <strain>P125109</strain>
    </source>
</reference>
<gene>
    <name evidence="1" type="primary">rlmL</name>
    <name type="ordered locus">SEN0926</name>
</gene>
<comment type="function">
    <text evidence="1">Specifically methylates the guanine in position 2445 (m2G2445) and the guanine in position 2069 (m7G2069) of 23S rRNA.</text>
</comment>
<comment type="catalytic activity">
    <reaction evidence="1">
        <text>guanosine(2445) in 23S rRNA + S-adenosyl-L-methionine = N(2)-methylguanosine(2445) in 23S rRNA + S-adenosyl-L-homocysteine + H(+)</text>
        <dbReference type="Rhea" id="RHEA:42740"/>
        <dbReference type="Rhea" id="RHEA-COMP:10215"/>
        <dbReference type="Rhea" id="RHEA-COMP:10216"/>
        <dbReference type="ChEBI" id="CHEBI:15378"/>
        <dbReference type="ChEBI" id="CHEBI:57856"/>
        <dbReference type="ChEBI" id="CHEBI:59789"/>
        <dbReference type="ChEBI" id="CHEBI:74269"/>
        <dbReference type="ChEBI" id="CHEBI:74481"/>
        <dbReference type="EC" id="2.1.1.173"/>
    </reaction>
</comment>
<comment type="catalytic activity">
    <reaction evidence="1">
        <text>guanosine(2069) in 23S rRNA + S-adenosyl-L-methionine = N(2)-methylguanosine(2069) in 23S rRNA + S-adenosyl-L-homocysteine + H(+)</text>
        <dbReference type="Rhea" id="RHEA:43772"/>
        <dbReference type="Rhea" id="RHEA-COMP:10688"/>
        <dbReference type="Rhea" id="RHEA-COMP:10689"/>
        <dbReference type="ChEBI" id="CHEBI:15378"/>
        <dbReference type="ChEBI" id="CHEBI:57856"/>
        <dbReference type="ChEBI" id="CHEBI:59789"/>
        <dbReference type="ChEBI" id="CHEBI:74269"/>
        <dbReference type="ChEBI" id="CHEBI:74481"/>
        <dbReference type="EC" id="2.1.1.264"/>
    </reaction>
</comment>
<comment type="subcellular location">
    <subcellularLocation>
        <location evidence="1">Cytoplasm</location>
    </subcellularLocation>
</comment>
<comment type="similarity">
    <text evidence="1">Belongs to the methyltransferase superfamily. RlmKL family.</text>
</comment>
<dbReference type="EC" id="2.1.1.173" evidence="1"/>
<dbReference type="EC" id="2.1.1.264" evidence="1"/>
<dbReference type="EMBL" id="AM933172">
    <property type="protein sequence ID" value="CAR32509.1"/>
    <property type="molecule type" value="Genomic_DNA"/>
</dbReference>
<dbReference type="SMR" id="B5QZF1"/>
<dbReference type="KEGG" id="set:SEN0926"/>
<dbReference type="HOGENOM" id="CLU_014042_2_0_6"/>
<dbReference type="Proteomes" id="UP000000613">
    <property type="component" value="Chromosome"/>
</dbReference>
<dbReference type="GO" id="GO:0005737">
    <property type="term" value="C:cytoplasm"/>
    <property type="evidence" value="ECO:0007669"/>
    <property type="project" value="UniProtKB-SubCell"/>
</dbReference>
<dbReference type="GO" id="GO:0052915">
    <property type="term" value="F:23S rRNA (guanine(2445)-N(2))-methyltransferase activity"/>
    <property type="evidence" value="ECO:0007669"/>
    <property type="project" value="UniProtKB-UniRule"/>
</dbReference>
<dbReference type="GO" id="GO:0003723">
    <property type="term" value="F:RNA binding"/>
    <property type="evidence" value="ECO:0007669"/>
    <property type="project" value="UniProtKB-KW"/>
</dbReference>
<dbReference type="GO" id="GO:0070043">
    <property type="term" value="F:rRNA (guanine-N7-)-methyltransferase activity"/>
    <property type="evidence" value="ECO:0007669"/>
    <property type="project" value="UniProtKB-UniRule"/>
</dbReference>
<dbReference type="CDD" id="cd02440">
    <property type="entry name" value="AdoMet_MTases"/>
    <property type="match status" value="2"/>
</dbReference>
<dbReference type="CDD" id="cd11715">
    <property type="entry name" value="THUMP_AdoMetMT"/>
    <property type="match status" value="1"/>
</dbReference>
<dbReference type="FunFam" id="3.30.750.80:FF:000001">
    <property type="entry name" value="Ribosomal RNA large subunit methyltransferase K/L"/>
    <property type="match status" value="1"/>
</dbReference>
<dbReference type="FunFam" id="3.40.50.150:FF:000039">
    <property type="entry name" value="Ribosomal RNA large subunit methyltransferase K/L"/>
    <property type="match status" value="1"/>
</dbReference>
<dbReference type="Gene3D" id="3.30.2130.30">
    <property type="match status" value="1"/>
</dbReference>
<dbReference type="Gene3D" id="3.30.750.80">
    <property type="entry name" value="RNA methyltransferase domain (HRMD) like"/>
    <property type="match status" value="1"/>
</dbReference>
<dbReference type="Gene3D" id="3.40.50.150">
    <property type="entry name" value="Vaccinia Virus protein VP39"/>
    <property type="match status" value="2"/>
</dbReference>
<dbReference type="HAMAP" id="MF_01858">
    <property type="entry name" value="23SrRNA_methyltr_KL"/>
    <property type="match status" value="1"/>
</dbReference>
<dbReference type="InterPro" id="IPR017244">
    <property type="entry name" value="23SrRNA_methyltr_KL"/>
</dbReference>
<dbReference type="InterPro" id="IPR002052">
    <property type="entry name" value="DNA_methylase_N6_adenine_CS"/>
</dbReference>
<dbReference type="InterPro" id="IPR000241">
    <property type="entry name" value="RlmKL-like_Mtase"/>
</dbReference>
<dbReference type="InterPro" id="IPR053943">
    <property type="entry name" value="RlmKL-like_Mtase_CS"/>
</dbReference>
<dbReference type="InterPro" id="IPR054170">
    <property type="entry name" value="RlmL_1st"/>
</dbReference>
<dbReference type="InterPro" id="IPR019614">
    <property type="entry name" value="SAM-dep_methyl-trfase"/>
</dbReference>
<dbReference type="InterPro" id="IPR029063">
    <property type="entry name" value="SAM-dependent_MTases_sf"/>
</dbReference>
<dbReference type="InterPro" id="IPR004114">
    <property type="entry name" value="THUMP_dom"/>
</dbReference>
<dbReference type="NCBIfam" id="NF008748">
    <property type="entry name" value="PRK11783.1"/>
    <property type="match status" value="1"/>
</dbReference>
<dbReference type="PANTHER" id="PTHR47313">
    <property type="entry name" value="RIBOSOMAL RNA LARGE SUBUNIT METHYLTRANSFERASE K/L"/>
    <property type="match status" value="1"/>
</dbReference>
<dbReference type="PANTHER" id="PTHR47313:SF1">
    <property type="entry name" value="RIBOSOMAL RNA LARGE SUBUNIT METHYLTRANSFERASE K_L"/>
    <property type="match status" value="1"/>
</dbReference>
<dbReference type="Pfam" id="PF10672">
    <property type="entry name" value="Methyltrans_SAM"/>
    <property type="match status" value="1"/>
</dbReference>
<dbReference type="Pfam" id="PF22020">
    <property type="entry name" value="RlmL_1st"/>
    <property type="match status" value="1"/>
</dbReference>
<dbReference type="Pfam" id="PF02926">
    <property type="entry name" value="THUMP"/>
    <property type="match status" value="1"/>
</dbReference>
<dbReference type="Pfam" id="PF01170">
    <property type="entry name" value="UPF0020"/>
    <property type="match status" value="1"/>
</dbReference>
<dbReference type="PIRSF" id="PIRSF037618">
    <property type="entry name" value="RNA_Mtase_bacteria_prd"/>
    <property type="match status" value="1"/>
</dbReference>
<dbReference type="PRINTS" id="PR00507">
    <property type="entry name" value="N12N6MTFRASE"/>
</dbReference>
<dbReference type="SMART" id="SM00981">
    <property type="entry name" value="THUMP"/>
    <property type="match status" value="1"/>
</dbReference>
<dbReference type="SUPFAM" id="SSF53335">
    <property type="entry name" value="S-adenosyl-L-methionine-dependent methyltransferases"/>
    <property type="match status" value="2"/>
</dbReference>
<dbReference type="PROSITE" id="PS51165">
    <property type="entry name" value="THUMP"/>
    <property type="match status" value="1"/>
</dbReference>
<dbReference type="PROSITE" id="PS01261">
    <property type="entry name" value="UPF0020"/>
    <property type="match status" value="1"/>
</dbReference>
<organism>
    <name type="scientific">Salmonella enteritidis PT4 (strain P125109)</name>
    <dbReference type="NCBI Taxonomy" id="550537"/>
    <lineage>
        <taxon>Bacteria</taxon>
        <taxon>Pseudomonadati</taxon>
        <taxon>Pseudomonadota</taxon>
        <taxon>Gammaproteobacteria</taxon>
        <taxon>Enterobacterales</taxon>
        <taxon>Enterobacteriaceae</taxon>
        <taxon>Salmonella</taxon>
    </lineage>
</organism>
<protein>
    <recommendedName>
        <fullName evidence="1">Ribosomal RNA large subunit methyltransferase K/L</fullName>
    </recommendedName>
    <domain>
        <recommendedName>
            <fullName evidence="1">23S rRNA m2G2445 methyltransferase</fullName>
            <ecNumber evidence="1">2.1.1.173</ecNumber>
        </recommendedName>
        <alternativeName>
            <fullName evidence="1">rRNA (guanine-N(2)-)-methyltransferase RlmL</fullName>
        </alternativeName>
    </domain>
    <domain>
        <recommendedName>
            <fullName evidence="1">23S rRNA m7G2069 methyltransferase</fullName>
            <ecNumber evidence="1">2.1.1.264</ecNumber>
        </recommendedName>
        <alternativeName>
            <fullName evidence="1">rRNA (guanine-N(7)-)-methyltransferase RlmK</fullName>
        </alternativeName>
    </domain>
</protein>
<accession>B5QZF1</accession>